<organism>
    <name type="scientific">Homo sapiens</name>
    <name type="common">Human</name>
    <dbReference type="NCBI Taxonomy" id="9606"/>
    <lineage>
        <taxon>Eukaryota</taxon>
        <taxon>Metazoa</taxon>
        <taxon>Chordata</taxon>
        <taxon>Craniata</taxon>
        <taxon>Vertebrata</taxon>
        <taxon>Euteleostomi</taxon>
        <taxon>Mammalia</taxon>
        <taxon>Eutheria</taxon>
        <taxon>Euarchontoglires</taxon>
        <taxon>Primates</taxon>
        <taxon>Haplorrhini</taxon>
        <taxon>Catarrhini</taxon>
        <taxon>Hominidae</taxon>
        <taxon>Homo</taxon>
    </lineage>
</organism>
<dbReference type="EMBL" id="AJ272034">
    <property type="protein sequence ID" value="CAC03489.1"/>
    <property type="molecule type" value="mRNA"/>
</dbReference>
<dbReference type="EMBL" id="AY167927">
    <property type="protein sequence ID" value="AAO12125.1"/>
    <property type="molecule type" value="mRNA"/>
</dbReference>
<dbReference type="EMBL" id="AJ549088">
    <property type="protein sequence ID" value="CAD70161.1"/>
    <property type="molecule type" value="mRNA"/>
</dbReference>
<dbReference type="EMBL" id="AC008661">
    <property type="status" value="NOT_ANNOTATED_CDS"/>
    <property type="molecule type" value="Genomic_DNA"/>
</dbReference>
<dbReference type="EMBL" id="BC128185">
    <property type="protein sequence ID" value="AAI28186.1"/>
    <property type="molecule type" value="mRNA"/>
</dbReference>
<dbReference type="CCDS" id="CCDS47267.2">
    <molecule id="Q9HCX4-1"/>
</dbReference>
<dbReference type="CCDS" id="CCDS54905.1">
    <molecule id="Q9HCX4-2"/>
</dbReference>
<dbReference type="CCDS" id="CCDS54906.1">
    <molecule id="Q9HCX4-3"/>
</dbReference>
<dbReference type="RefSeq" id="NP_001161048.1">
    <molecule id="Q9HCX4-2"/>
    <property type="nucleotide sequence ID" value="NM_001167576.2"/>
</dbReference>
<dbReference type="RefSeq" id="NP_001161049.1">
    <molecule id="Q9HCX4-3"/>
    <property type="nucleotide sequence ID" value="NM_001167577.2"/>
</dbReference>
<dbReference type="RefSeq" id="NP_065122.1">
    <molecule id="Q9HCX4-1"/>
    <property type="nucleotide sequence ID" value="NM_020389.3"/>
</dbReference>
<dbReference type="SMR" id="Q9HCX4"/>
<dbReference type="BioGRID" id="121378">
    <property type="interactions" value="5"/>
</dbReference>
<dbReference type="CORUM" id="Q9HCX4"/>
<dbReference type="FunCoup" id="Q9HCX4">
    <property type="interactions" value="30"/>
</dbReference>
<dbReference type="IntAct" id="Q9HCX4">
    <property type="interactions" value="2"/>
</dbReference>
<dbReference type="STRING" id="9606.ENSP00000426070"/>
<dbReference type="BindingDB" id="Q9HCX4"/>
<dbReference type="ChEMBL" id="CHEMBL4105799"/>
<dbReference type="GuidetoPHARMACOLOGY" id="492"/>
<dbReference type="GlyCosmos" id="Q9HCX4">
    <property type="glycosylation" value="1 site, No reported glycans"/>
</dbReference>
<dbReference type="GlyGen" id="Q9HCX4">
    <property type="glycosylation" value="1 site"/>
</dbReference>
<dbReference type="iPTMnet" id="Q9HCX4"/>
<dbReference type="PhosphoSitePlus" id="Q9HCX4"/>
<dbReference type="BioMuta" id="TRPC7"/>
<dbReference type="DMDM" id="18202960"/>
<dbReference type="jPOST" id="Q9HCX4"/>
<dbReference type="MassIVE" id="Q9HCX4"/>
<dbReference type="PaxDb" id="9606-ENSP00000426070"/>
<dbReference type="PeptideAtlas" id="Q9HCX4"/>
<dbReference type="ProteomicsDB" id="26990"/>
<dbReference type="ProteomicsDB" id="81805">
    <molecule id="Q9HCX4-1"/>
</dbReference>
<dbReference type="ProteomicsDB" id="81806">
    <molecule id="Q9HCX4-2"/>
</dbReference>
<dbReference type="Antibodypedia" id="26493">
    <property type="antibodies" value="304 antibodies from 34 providers"/>
</dbReference>
<dbReference type="DNASU" id="57113"/>
<dbReference type="Ensembl" id="ENST00000352189.8">
    <molecule id="Q9HCX4-2"/>
    <property type="protein sequence ID" value="ENSP00000330322.5"/>
    <property type="gene ID" value="ENSG00000069018.19"/>
</dbReference>
<dbReference type="Ensembl" id="ENST00000378459.7">
    <molecule id="Q9HCX4-3"/>
    <property type="protein sequence ID" value="ENSP00000367720.3"/>
    <property type="gene ID" value="ENSG00000069018.19"/>
</dbReference>
<dbReference type="Ensembl" id="ENST00000513104.6">
    <molecule id="Q9HCX4-1"/>
    <property type="protein sequence ID" value="ENSP00000426070.2"/>
    <property type="gene ID" value="ENSG00000069018.19"/>
</dbReference>
<dbReference type="GeneID" id="57113"/>
<dbReference type="KEGG" id="hsa:57113"/>
<dbReference type="MANE-Select" id="ENST00000513104.6">
    <property type="protein sequence ID" value="ENSP00000426070.2"/>
    <property type="RefSeq nucleotide sequence ID" value="NM_020389.3"/>
    <property type="RefSeq protein sequence ID" value="NP_065122.1"/>
</dbReference>
<dbReference type="UCSC" id="uc003lbn.3">
    <molecule id="Q9HCX4-1"/>
    <property type="organism name" value="human"/>
</dbReference>
<dbReference type="AGR" id="HGNC:20754"/>
<dbReference type="CTD" id="57113"/>
<dbReference type="DisGeNET" id="57113"/>
<dbReference type="GeneCards" id="TRPC7"/>
<dbReference type="HGNC" id="HGNC:20754">
    <property type="gene designation" value="TRPC7"/>
</dbReference>
<dbReference type="HPA" id="ENSG00000069018">
    <property type="expression patterns" value="Not detected"/>
</dbReference>
<dbReference type="neXtProt" id="NX_Q9HCX4"/>
<dbReference type="OpenTargets" id="ENSG00000069018"/>
<dbReference type="PharmGKB" id="PA164742693"/>
<dbReference type="VEuPathDB" id="HostDB:ENSG00000069018"/>
<dbReference type="eggNOG" id="KOG3609">
    <property type="taxonomic scope" value="Eukaryota"/>
</dbReference>
<dbReference type="GeneTree" id="ENSGT01060000248588"/>
<dbReference type="HOGENOM" id="CLU_005716_4_2_1"/>
<dbReference type="InParanoid" id="Q9HCX4"/>
<dbReference type="OMA" id="CLECMEK"/>
<dbReference type="OrthoDB" id="2373987at2759"/>
<dbReference type="PAN-GO" id="Q9HCX4">
    <property type="GO annotations" value="8 GO annotations based on evolutionary models"/>
</dbReference>
<dbReference type="PhylomeDB" id="Q9HCX4"/>
<dbReference type="TreeFam" id="TF313147"/>
<dbReference type="PathwayCommons" id="Q9HCX4"/>
<dbReference type="Reactome" id="R-HSA-114508">
    <property type="pathway name" value="Effects of PIP2 hydrolysis"/>
</dbReference>
<dbReference type="Reactome" id="R-HSA-139853">
    <property type="pathway name" value="Elevation of cytosolic Ca2+ levels"/>
</dbReference>
<dbReference type="Reactome" id="R-HSA-3295583">
    <property type="pathway name" value="TRP channels"/>
</dbReference>
<dbReference type="Reactome" id="R-HSA-418890">
    <property type="pathway name" value="Role of second messengers in netrin-1 signaling"/>
</dbReference>
<dbReference type="SignaLink" id="Q9HCX4"/>
<dbReference type="SIGNOR" id="Q9HCX4"/>
<dbReference type="BioGRID-ORCS" id="57113">
    <property type="hits" value="9 hits in 1143 CRISPR screens"/>
</dbReference>
<dbReference type="ChiTaRS" id="TRPC7">
    <property type="organism name" value="human"/>
</dbReference>
<dbReference type="GeneWiki" id="TRPC7"/>
<dbReference type="GenomeRNAi" id="57113"/>
<dbReference type="Pharos" id="Q9HCX4">
    <property type="development level" value="Tchem"/>
</dbReference>
<dbReference type="PRO" id="PR:Q9HCX4"/>
<dbReference type="Proteomes" id="UP000005640">
    <property type="component" value="Chromosome 5"/>
</dbReference>
<dbReference type="RNAct" id="Q9HCX4">
    <property type="molecule type" value="protein"/>
</dbReference>
<dbReference type="Bgee" id="ENSG00000069018">
    <property type="expression patterns" value="Expressed in buccal mucosa cell and 39 other cell types or tissues"/>
</dbReference>
<dbReference type="ExpressionAtlas" id="Q9HCX4">
    <property type="expression patterns" value="baseline and differential"/>
</dbReference>
<dbReference type="GO" id="GO:0034703">
    <property type="term" value="C:cation channel complex"/>
    <property type="evidence" value="ECO:0000318"/>
    <property type="project" value="GO_Central"/>
</dbReference>
<dbReference type="GO" id="GO:0005635">
    <property type="term" value="C:nuclear envelope"/>
    <property type="evidence" value="ECO:0007669"/>
    <property type="project" value="UniProtKB-SubCell"/>
</dbReference>
<dbReference type="GO" id="GO:0048471">
    <property type="term" value="C:perinuclear region of cytoplasm"/>
    <property type="evidence" value="ECO:0007669"/>
    <property type="project" value="Ensembl"/>
</dbReference>
<dbReference type="GO" id="GO:0005886">
    <property type="term" value="C:plasma membrane"/>
    <property type="evidence" value="ECO:0000318"/>
    <property type="project" value="GO_Central"/>
</dbReference>
<dbReference type="GO" id="GO:0005262">
    <property type="term" value="F:calcium channel activity"/>
    <property type="evidence" value="ECO:0000304"/>
    <property type="project" value="Reactome"/>
</dbReference>
<dbReference type="GO" id="GO:0070679">
    <property type="term" value="F:inositol 1,4,5 trisphosphate binding"/>
    <property type="evidence" value="ECO:0000318"/>
    <property type="project" value="GO_Central"/>
</dbReference>
<dbReference type="GO" id="GO:0015279">
    <property type="term" value="F:store-operated calcium channel activity"/>
    <property type="evidence" value="ECO:0000318"/>
    <property type="project" value="GO_Central"/>
</dbReference>
<dbReference type="GO" id="GO:0070588">
    <property type="term" value="P:calcium ion transmembrane transport"/>
    <property type="evidence" value="ECO:0000318"/>
    <property type="project" value="GO_Central"/>
</dbReference>
<dbReference type="GO" id="GO:0006828">
    <property type="term" value="P:manganese ion transport"/>
    <property type="evidence" value="ECO:0007669"/>
    <property type="project" value="Ensembl"/>
</dbReference>
<dbReference type="GO" id="GO:0051480">
    <property type="term" value="P:regulation of cytosolic calcium ion concentration"/>
    <property type="evidence" value="ECO:0000318"/>
    <property type="project" value="GO_Central"/>
</dbReference>
<dbReference type="GO" id="GO:0007338">
    <property type="term" value="P:single fertilization"/>
    <property type="evidence" value="ECO:0000318"/>
    <property type="project" value="GO_Central"/>
</dbReference>
<dbReference type="FunFam" id="1.25.40.20:FF:000157">
    <property type="entry name" value="short transient receptor potential channel 6 isoform X1"/>
    <property type="match status" value="1"/>
</dbReference>
<dbReference type="FunFam" id="1.10.287.70:FF:000041">
    <property type="entry name" value="Transient receptor potential cation channel subfamily C member 7"/>
    <property type="match status" value="1"/>
</dbReference>
<dbReference type="Gene3D" id="1.10.287.70">
    <property type="match status" value="1"/>
</dbReference>
<dbReference type="Gene3D" id="1.25.40.20">
    <property type="entry name" value="Ankyrin repeat-containing domain"/>
    <property type="match status" value="1"/>
</dbReference>
<dbReference type="InterPro" id="IPR002110">
    <property type="entry name" value="Ankyrin_rpt"/>
</dbReference>
<dbReference type="InterPro" id="IPR036770">
    <property type="entry name" value="Ankyrin_rpt-contain_sf"/>
</dbReference>
<dbReference type="InterPro" id="IPR005821">
    <property type="entry name" value="Ion_trans_dom"/>
</dbReference>
<dbReference type="InterPro" id="IPR013555">
    <property type="entry name" value="TRP_dom"/>
</dbReference>
<dbReference type="InterPro" id="IPR005463">
    <property type="entry name" value="TRPC7_channel"/>
</dbReference>
<dbReference type="InterPro" id="IPR002153">
    <property type="entry name" value="TRPC_channel"/>
</dbReference>
<dbReference type="NCBIfam" id="TIGR00870">
    <property type="entry name" value="trp"/>
    <property type="match status" value="1"/>
</dbReference>
<dbReference type="PANTHER" id="PTHR10117:SF9">
    <property type="entry name" value="SHORT TRANSIENT RECEPTOR POTENTIAL CHANNEL 7"/>
    <property type="match status" value="1"/>
</dbReference>
<dbReference type="PANTHER" id="PTHR10117">
    <property type="entry name" value="TRANSIENT RECEPTOR POTENTIAL CHANNEL"/>
    <property type="match status" value="1"/>
</dbReference>
<dbReference type="Pfam" id="PF12796">
    <property type="entry name" value="Ank_2"/>
    <property type="match status" value="1"/>
</dbReference>
<dbReference type="Pfam" id="PF00520">
    <property type="entry name" value="Ion_trans"/>
    <property type="match status" value="1"/>
</dbReference>
<dbReference type="Pfam" id="PF08344">
    <property type="entry name" value="TRP_2"/>
    <property type="match status" value="1"/>
</dbReference>
<dbReference type="PRINTS" id="PR01097">
    <property type="entry name" value="TRNSRECEPTRP"/>
</dbReference>
<dbReference type="PRINTS" id="PR01648">
    <property type="entry name" value="TRPCHANNEL7"/>
</dbReference>
<dbReference type="SMART" id="SM00248">
    <property type="entry name" value="ANK"/>
    <property type="match status" value="3"/>
</dbReference>
<dbReference type="SMART" id="SM01420">
    <property type="entry name" value="TRP_2"/>
    <property type="match status" value="1"/>
</dbReference>
<dbReference type="SUPFAM" id="SSF48403">
    <property type="entry name" value="Ankyrin repeat"/>
    <property type="match status" value="1"/>
</dbReference>
<protein>
    <recommendedName>
        <fullName>Short transient receptor potential channel 7</fullName>
        <shortName>TrpC7</shortName>
    </recommendedName>
    <alternativeName>
        <fullName>Transient receptor protein 7</fullName>
        <shortName>TRP-7</shortName>
        <shortName>hTRP7</shortName>
    </alternativeName>
</protein>
<sequence length="862" mass="99562">MLRNSTFKNMQRRHTTLREKGRRQAIRGPAYMFNEKGTSLTPEEERFLDSAEYGNIPVVRKMLEESKTLNFNCVDYMGQNALQLAVGNEHLEVTELLLKKENLARVGDALLLAISKGYVRIVEAILNHPAFAQGQRLTLSPLEQELRDDDFYAYDEDGTRFSHDITPIILAAHCQEYEIVHILLLKGARIERPHDYFCKCNECTEKQRKDSFSHSRSRMNAYKGLASAAYLSLSSEDPVLTALELSNELARLANIETEFKNDYRKLSMQCKDFVVGVLDLCRDTEEVEAILNGDVNFQVWSDHHRPSLSRIKLAIKYEVKKFVAHPNCQQQLLTMWYENLSGLRQQSIAVKFLAVFGVSIGLPFLAIAYWIAPCSKLGRTLRSPFMKFVAHAVSFTIFLGLLVVNASDRFEGVKTLPNETFTDYPKQIFRVKTTQFSWTEMLIMKWVLGMIWSECKEIWEEGPREYVLHLWNLLDFGMLSIFVASFTARFMAFLKATEAQLYVDQHVQDDTLHNVSLPPEVAYFTYARDKWWPSDPQIISEGLYAIAVVLSFSRIAYILPANESFGPLQISLGRTVKDIFKFMVIFIMVFVAFMIGMFNLYSYYRGAKYNPAFTTVEESFKTLFWSIFGLSEVISVVLKYDHKFIENIGYVLYGVYNVTMVVVLLNMLIAMINNSYQEIEEDADVEWKFARAKLWLSYFDEGRTLPAPFNLVPSPKSFYYLIMRIKMCLIKLCKSKAKSCENDLEMGMLNSKFKKTRYQAGMRNSENLTANNTLSKPTRYQKIMKRLIKRYVLKAQVDRENDEVNEGELKEIKQDISSLRYELLEEKSQATGELADLIQQLSEKFGKNLNKDHLRVNKGKDI</sequence>
<proteinExistence type="evidence at protein level"/>
<reference key="1">
    <citation type="submission" date="2000-02" db="EMBL/GenBank/DDBJ databases">
        <title>Distribution of a novel human capacitative calcium entry channel, htrp7.</title>
        <authorList>
            <person name="Murphy C.T."/>
            <person name="Li S."/>
            <person name="Jordan N.J."/>
            <person name="Reaves B.J."/>
            <person name="Wolstenholme A.J."/>
            <person name="Westwick J."/>
        </authorList>
    </citation>
    <scope>NUCLEOTIDE SEQUENCE [MRNA] (ISOFORM 1)</scope>
    <source>
        <tissue>Brain</tissue>
    </source>
</reference>
<reference key="2">
    <citation type="submission" date="2002-10" db="EMBL/GenBank/DDBJ databases">
        <title>Localization of TRPC7 and splice variants in human tissues.</title>
        <authorList>
            <person name="Xu S.-Z."/>
            <person name="Beech D.J."/>
        </authorList>
    </citation>
    <scope>NUCLEOTIDE SEQUENCE [MRNA] (ISOFORM 2)</scope>
</reference>
<reference key="3">
    <citation type="submission" date="2003-03" db="EMBL/GenBank/DDBJ databases">
        <title>Tissue distribution, alternative splicing and function of human TRPC7.</title>
        <authorList>
            <person name="Aptel H."/>
            <person name="Murphy C.T."/>
            <person name="Li S.W."/>
            <person name="Chen P.B."/>
            <person name="Rogers A.T."/>
            <person name="Franklin I."/>
            <person name="Westwick J."/>
            <person name="Reaves B.J."/>
            <person name="Woodward B."/>
            <person name="Wolstenholme A.J."/>
        </authorList>
    </citation>
    <scope>NUCLEOTIDE SEQUENCE [MRNA] (ISOFORM 3)</scope>
    <source>
        <tissue>Brain</tissue>
    </source>
</reference>
<reference key="4">
    <citation type="journal article" date="2004" name="Nature">
        <title>The DNA sequence and comparative analysis of human chromosome 5.</title>
        <authorList>
            <person name="Schmutz J."/>
            <person name="Martin J."/>
            <person name="Terry A."/>
            <person name="Couronne O."/>
            <person name="Grimwood J."/>
            <person name="Lowry S."/>
            <person name="Gordon L.A."/>
            <person name="Scott D."/>
            <person name="Xie G."/>
            <person name="Huang W."/>
            <person name="Hellsten U."/>
            <person name="Tran-Gyamfi M."/>
            <person name="She X."/>
            <person name="Prabhakar S."/>
            <person name="Aerts A."/>
            <person name="Altherr M."/>
            <person name="Bajorek E."/>
            <person name="Black S."/>
            <person name="Branscomb E."/>
            <person name="Caoile C."/>
            <person name="Challacombe J.F."/>
            <person name="Chan Y.M."/>
            <person name="Denys M."/>
            <person name="Detter J.C."/>
            <person name="Escobar J."/>
            <person name="Flowers D."/>
            <person name="Fotopulos D."/>
            <person name="Glavina T."/>
            <person name="Gomez M."/>
            <person name="Gonzales E."/>
            <person name="Goodstein D."/>
            <person name="Grigoriev I."/>
            <person name="Groza M."/>
            <person name="Hammon N."/>
            <person name="Hawkins T."/>
            <person name="Haydu L."/>
            <person name="Israni S."/>
            <person name="Jett J."/>
            <person name="Kadner K."/>
            <person name="Kimball H."/>
            <person name="Kobayashi A."/>
            <person name="Lopez F."/>
            <person name="Lou Y."/>
            <person name="Martinez D."/>
            <person name="Medina C."/>
            <person name="Morgan J."/>
            <person name="Nandkeshwar R."/>
            <person name="Noonan J.P."/>
            <person name="Pitluck S."/>
            <person name="Pollard M."/>
            <person name="Predki P."/>
            <person name="Priest J."/>
            <person name="Ramirez L."/>
            <person name="Retterer J."/>
            <person name="Rodriguez A."/>
            <person name="Rogers S."/>
            <person name="Salamov A."/>
            <person name="Salazar A."/>
            <person name="Thayer N."/>
            <person name="Tice H."/>
            <person name="Tsai M."/>
            <person name="Ustaszewska A."/>
            <person name="Vo N."/>
            <person name="Wheeler J."/>
            <person name="Wu K."/>
            <person name="Yang J."/>
            <person name="Dickson M."/>
            <person name="Cheng J.-F."/>
            <person name="Eichler E.E."/>
            <person name="Olsen A."/>
            <person name="Pennacchio L.A."/>
            <person name="Rokhsar D.S."/>
            <person name="Richardson P."/>
            <person name="Lucas S.M."/>
            <person name="Myers R.M."/>
            <person name="Rubin E.M."/>
        </authorList>
    </citation>
    <scope>NUCLEOTIDE SEQUENCE [LARGE SCALE GENOMIC DNA]</scope>
</reference>
<reference key="5">
    <citation type="journal article" date="2004" name="Genome Res.">
        <title>The status, quality, and expansion of the NIH full-length cDNA project: the Mammalian Gene Collection (MGC).</title>
        <authorList>
            <consortium name="The MGC Project Team"/>
        </authorList>
    </citation>
    <scope>NUCLEOTIDE SEQUENCE [LARGE SCALE MRNA] (ISOFORM 1)</scope>
</reference>
<reference key="6">
    <citation type="journal article" date="2005" name="J. Biol. Chem.">
        <title>MxA, a member of the dynamin superfamily, interacts with the ankyrin-like repeat domain of TRPC.</title>
        <authorList>
            <person name="Lussier M.P."/>
            <person name="Cayouette S."/>
            <person name="Lepage P.K."/>
            <person name="Bernier C.L."/>
            <person name="Francoeur N."/>
            <person name="St-Hilaire M."/>
            <person name="Pinard M."/>
            <person name="Boulay G."/>
        </authorList>
    </citation>
    <scope>INTERACTION WITH MX1</scope>
</reference>
<reference key="7">
    <citation type="journal article" date="2008" name="Cell Calcium">
        <title>RNF24, a new TRPC interacting protein, causes the intracellular retention of TRPC.</title>
        <authorList>
            <person name="Lussier M.P."/>
            <person name="Lepage P.K."/>
            <person name="Bousquet S.M."/>
            <person name="Boulay G."/>
        </authorList>
    </citation>
    <scope>INTERACTION WITH RNF24</scope>
</reference>
<reference key="8">
    <citation type="journal article" date="2011" name="Cell. Signal.">
        <title>Functional regulation of transient receptor potential canonical 7 by cGMP-dependent protein kinase Ialpha.</title>
        <authorList>
            <person name="Yuasa K."/>
            <person name="Matsuda T."/>
            <person name="Tsuji A."/>
        </authorList>
    </citation>
    <scope>PHOSPHORYLATION AT THR-15 BY PRKG1</scope>
    <scope>INTERACTION WITH PRKG1</scope>
    <scope>SUBCELLULAR LOCATION</scope>
</reference>
<accession>Q9HCX4</accession>
<accession>A1A4Z4</accession>
<accession>F5H5U9</accession>
<accession>Q70T26</accession>
<accession>Q8IWP7</accession>
<evidence type="ECO:0000250" key="1">
    <source>
        <dbReference type="UniProtKB" id="Q9WVC5"/>
    </source>
</evidence>
<evidence type="ECO:0000255" key="2"/>
<evidence type="ECO:0000256" key="3">
    <source>
        <dbReference type="SAM" id="MobiDB-lite"/>
    </source>
</evidence>
<evidence type="ECO:0000269" key="4">
    <source>
    </source>
</evidence>
<evidence type="ECO:0000269" key="5">
    <source>
    </source>
</evidence>
<evidence type="ECO:0000269" key="6">
    <source>
    </source>
</evidence>
<evidence type="ECO:0000303" key="7">
    <source ref="2"/>
</evidence>
<evidence type="ECO:0000303" key="8">
    <source ref="3"/>
</evidence>
<evidence type="ECO:0000305" key="9"/>
<keyword id="KW-0025">Alternative splicing</keyword>
<keyword id="KW-0040">ANK repeat</keyword>
<keyword id="KW-0106">Calcium</keyword>
<keyword id="KW-0107">Calcium channel</keyword>
<keyword id="KW-0109">Calcium transport</keyword>
<keyword id="KW-1003">Cell membrane</keyword>
<keyword id="KW-0325">Glycoprotein</keyword>
<keyword id="KW-0407">Ion channel</keyword>
<keyword id="KW-0406">Ion transport</keyword>
<keyword id="KW-0472">Membrane</keyword>
<keyword id="KW-0539">Nucleus</keyword>
<keyword id="KW-0597">Phosphoprotein</keyword>
<keyword id="KW-1185">Reference proteome</keyword>
<keyword id="KW-0677">Repeat</keyword>
<keyword id="KW-0812">Transmembrane</keyword>
<keyword id="KW-1133">Transmembrane helix</keyword>
<keyword id="KW-0813">Transport</keyword>
<gene>
    <name type="primary">TRPC7</name>
    <name type="synonym">TRP7</name>
</gene>
<name>TRPC7_HUMAN</name>
<comment type="function">
    <text evidence="1">Forms a receptor-activated non-selective calcium permeant cation channel. Probably is operated by a phosphatidylinositol second messenger system activated by receptor tyrosine kinases or G-protein coupled receptors. Activated by diacylglycerol (DAG) (By similarity). May also be activated by intracellular calcium store depletion.</text>
</comment>
<comment type="catalytic activity">
    <reaction evidence="1">
        <text>Ca(2+)(in) = Ca(2+)(out)</text>
        <dbReference type="Rhea" id="RHEA:29671"/>
        <dbReference type="ChEBI" id="CHEBI:29108"/>
    </reaction>
</comment>
<comment type="subunit">
    <text evidence="4 5 6">Interacts with MX1 and RNF24. Interacts (via ANK-repeat domains) with PRKG1.</text>
</comment>
<comment type="subcellular location">
    <subcellularLocation>
        <location evidence="6">Cell membrane</location>
        <topology evidence="6">Multi-pass membrane protein</topology>
    </subcellularLocation>
    <subcellularLocation>
        <location evidence="6">Nucleus envelope</location>
    </subcellularLocation>
</comment>
<comment type="alternative products">
    <event type="alternative splicing"/>
    <isoform>
        <id>Q9HCX4-1</id>
        <name>1</name>
        <sequence type="displayed"/>
    </isoform>
    <isoform>
        <id>Q9HCX4-2</id>
        <name>2</name>
        <sequence type="described" ref="VSP_043035"/>
    </isoform>
    <isoform>
        <id>Q9HCX4-3</id>
        <name>3</name>
        <sequence type="described" ref="VSP_044897"/>
    </isoform>
</comment>
<comment type="PTM">
    <text evidence="6">Phosphorylation by PRKG1 at Thr-15 negatively regulates TRPC7 activity.</text>
</comment>
<comment type="similarity">
    <text evidence="9">Belongs to the transient receptor (TC 1.A.4) family. STrpC subfamily. TRPC7 sub-subfamily.</text>
</comment>
<feature type="chain" id="PRO_0000215324" description="Short transient receptor potential channel 7">
    <location>
        <begin position="1"/>
        <end position="862"/>
    </location>
</feature>
<feature type="topological domain" description="Cytoplasmic" evidence="2">
    <location>
        <begin position="1"/>
        <end position="351"/>
    </location>
</feature>
<feature type="transmembrane region" description="Helical" evidence="2">
    <location>
        <begin position="352"/>
        <end position="372"/>
    </location>
</feature>
<feature type="topological domain" description="Extracellular" evidence="2">
    <location>
        <begin position="373"/>
        <end position="383"/>
    </location>
</feature>
<feature type="transmembrane region" description="Helical" evidence="2">
    <location>
        <begin position="384"/>
        <end position="404"/>
    </location>
</feature>
<feature type="topological domain" description="Cytoplasmic" evidence="2">
    <location>
        <begin position="405"/>
        <end position="465"/>
    </location>
</feature>
<feature type="transmembrane region" description="Helical" evidence="2">
    <location>
        <begin position="466"/>
        <end position="486"/>
    </location>
</feature>
<feature type="topological domain" description="Extracellular" evidence="2">
    <location>
        <begin position="487"/>
        <end position="537"/>
    </location>
</feature>
<feature type="transmembrane region" description="Helical" evidence="2">
    <location>
        <begin position="538"/>
        <end position="558"/>
    </location>
</feature>
<feature type="topological domain" description="Cytoplasmic" evidence="2">
    <location>
        <begin position="559"/>
        <end position="581"/>
    </location>
</feature>
<feature type="transmembrane region" description="Helical" evidence="2">
    <location>
        <begin position="582"/>
        <end position="602"/>
    </location>
</feature>
<feature type="topological domain" description="Extracellular" evidence="2">
    <location>
        <begin position="603"/>
        <end position="651"/>
    </location>
</feature>
<feature type="transmembrane region" description="Helical" evidence="2">
    <location>
        <begin position="652"/>
        <end position="672"/>
    </location>
</feature>
<feature type="topological domain" description="Cytoplasmic" evidence="2">
    <location>
        <begin position="673"/>
        <end position="862"/>
    </location>
</feature>
<feature type="repeat" description="ANK 1">
    <location>
        <begin position="42"/>
        <end position="71"/>
    </location>
</feature>
<feature type="repeat" description="ANK 2">
    <location>
        <begin position="77"/>
        <end position="106"/>
    </location>
</feature>
<feature type="repeat" description="ANK 3">
    <location>
        <begin position="108"/>
        <end position="134"/>
    </location>
</feature>
<feature type="repeat" description="ANK 4">
    <location>
        <begin position="163"/>
        <end position="192"/>
    </location>
</feature>
<feature type="region of interest" description="Disordered" evidence="3">
    <location>
        <begin position="1"/>
        <end position="21"/>
    </location>
</feature>
<feature type="compositionally biased region" description="Basic residues" evidence="3">
    <location>
        <begin position="10"/>
        <end position="21"/>
    </location>
</feature>
<feature type="modified residue" description="Phosphothreonine; by PKG/PRKG1" evidence="6">
    <location>
        <position position="15"/>
    </location>
</feature>
<feature type="glycosylation site" description="N-linked (GlcNAc...) asparagine" evidence="2">
    <location>
        <position position="514"/>
    </location>
</feature>
<feature type="splice variant" id="VSP_043035" description="In isoform 2." evidence="7">
    <location>
        <begin position="260"/>
        <end position="375"/>
    </location>
</feature>
<feature type="splice variant" id="VSP_044897" description="In isoform 3." evidence="8">
    <location>
        <begin position="260"/>
        <end position="320"/>
    </location>
</feature>
<feature type="sequence conflict" description="In Ref. 3; CAD70161." evidence="9" ref="3">
    <original>G</original>
    <variation>S</variation>
    <location>
        <position position="412"/>
    </location>
</feature>
<feature type="sequence conflict" description="In Ref. 3; CAD70161." evidence="9" ref="3">
    <original>F</original>
    <variation>S</variation>
    <location>
        <position position="486"/>
    </location>
</feature>